<organism>
    <name type="scientific">Streptococcus pyogenes serotype M18 (strain MGAS8232)</name>
    <dbReference type="NCBI Taxonomy" id="186103"/>
    <lineage>
        <taxon>Bacteria</taxon>
        <taxon>Bacillati</taxon>
        <taxon>Bacillota</taxon>
        <taxon>Bacilli</taxon>
        <taxon>Lactobacillales</taxon>
        <taxon>Streptococcaceae</taxon>
        <taxon>Streptococcus</taxon>
    </lineage>
</organism>
<gene>
    <name type="ordered locus">spyM18_0409</name>
</gene>
<protein>
    <recommendedName>
        <fullName evidence="1">UPF0154 protein spyM18_0409</fullName>
    </recommendedName>
</protein>
<proteinExistence type="inferred from homology"/>
<sequence>MSTAIWILLLIVALGVGVFGGIFIARKQIEKEIGEHPRLTPEAIREMMSQMGQKPSEAKIQQTYRNIIKQSKAAVSKGKK</sequence>
<keyword id="KW-0472">Membrane</keyword>
<keyword id="KW-0812">Transmembrane</keyword>
<keyword id="KW-1133">Transmembrane helix</keyword>
<evidence type="ECO:0000255" key="1">
    <source>
        <dbReference type="HAMAP-Rule" id="MF_00363"/>
    </source>
</evidence>
<name>Y409_STRP8</name>
<dbReference type="EMBL" id="AE009949">
    <property type="protein sequence ID" value="AAL97153.1"/>
    <property type="molecule type" value="Genomic_DNA"/>
</dbReference>
<dbReference type="RefSeq" id="WP_002985908.1">
    <property type="nucleotide sequence ID" value="NC_003485.1"/>
</dbReference>
<dbReference type="SMR" id="P67297"/>
<dbReference type="KEGG" id="spm:spyM18_0409"/>
<dbReference type="HOGENOM" id="CLU_180108_0_0_9"/>
<dbReference type="GO" id="GO:0005886">
    <property type="term" value="C:plasma membrane"/>
    <property type="evidence" value="ECO:0007669"/>
    <property type="project" value="UniProtKB-UniRule"/>
</dbReference>
<dbReference type="HAMAP" id="MF_00363">
    <property type="entry name" value="UPF0154"/>
    <property type="match status" value="1"/>
</dbReference>
<dbReference type="InterPro" id="IPR005359">
    <property type="entry name" value="UPF0154"/>
</dbReference>
<dbReference type="Pfam" id="PF03672">
    <property type="entry name" value="UPF0154"/>
    <property type="match status" value="1"/>
</dbReference>
<accession>P67297</accession>
<accession>Q9A1B8</accession>
<feature type="chain" id="PRO_0000214991" description="UPF0154 protein spyM18_0409">
    <location>
        <begin position="1"/>
        <end position="80"/>
    </location>
</feature>
<feature type="transmembrane region" description="Helical" evidence="1">
    <location>
        <begin position="4"/>
        <end position="24"/>
    </location>
</feature>
<reference key="1">
    <citation type="journal article" date="2002" name="Proc. Natl. Acad. Sci. U.S.A.">
        <title>Genome sequence and comparative microarray analysis of serotype M18 group A Streptococcus strains associated with acute rheumatic fever outbreaks.</title>
        <authorList>
            <person name="Smoot J.C."/>
            <person name="Barbian K.D."/>
            <person name="Van Gompel J.J."/>
            <person name="Smoot L.M."/>
            <person name="Chaussee M.S."/>
            <person name="Sylva G.L."/>
            <person name="Sturdevant D.E."/>
            <person name="Ricklefs S.M."/>
            <person name="Porcella S.F."/>
            <person name="Parkins L.D."/>
            <person name="Beres S.B."/>
            <person name="Campbell D.S."/>
            <person name="Smith T.M."/>
            <person name="Zhang Q."/>
            <person name="Kapur V."/>
            <person name="Daly J.A."/>
            <person name="Veasy L.G."/>
            <person name="Musser J.M."/>
        </authorList>
    </citation>
    <scope>NUCLEOTIDE SEQUENCE [LARGE SCALE GENOMIC DNA]</scope>
    <source>
        <strain>MGAS8232</strain>
    </source>
</reference>
<comment type="subcellular location">
    <subcellularLocation>
        <location evidence="1">Membrane</location>
        <topology evidence="1">Single-pass membrane protein</topology>
    </subcellularLocation>
</comment>
<comment type="similarity">
    <text evidence="1">Belongs to the UPF0154 family.</text>
</comment>